<proteinExistence type="inferred from homology"/>
<comment type="function">
    <text evidence="1">IGPS catalyzes the conversion of PRFAR and glutamine to IGP, AICAR and glutamate. The HisF subunit catalyzes the cyclization activity that produces IGP and AICAR from PRFAR using the ammonia provided by the HisH subunit.</text>
</comment>
<comment type="catalytic activity">
    <reaction evidence="1">
        <text>5-[(5-phospho-1-deoxy-D-ribulos-1-ylimino)methylamino]-1-(5-phospho-beta-D-ribosyl)imidazole-4-carboxamide + L-glutamine = D-erythro-1-(imidazol-4-yl)glycerol 3-phosphate + 5-amino-1-(5-phospho-beta-D-ribosyl)imidazole-4-carboxamide + L-glutamate + H(+)</text>
        <dbReference type="Rhea" id="RHEA:24793"/>
        <dbReference type="ChEBI" id="CHEBI:15378"/>
        <dbReference type="ChEBI" id="CHEBI:29985"/>
        <dbReference type="ChEBI" id="CHEBI:58278"/>
        <dbReference type="ChEBI" id="CHEBI:58359"/>
        <dbReference type="ChEBI" id="CHEBI:58475"/>
        <dbReference type="ChEBI" id="CHEBI:58525"/>
        <dbReference type="EC" id="4.3.2.10"/>
    </reaction>
</comment>
<comment type="pathway">
    <text evidence="1">Amino-acid biosynthesis; L-histidine biosynthesis; L-histidine from 5-phospho-alpha-D-ribose 1-diphosphate: step 5/9.</text>
</comment>
<comment type="subunit">
    <text evidence="1">Heterodimer of HisH and HisF.</text>
</comment>
<comment type="subcellular location">
    <subcellularLocation>
        <location evidence="1">Cytoplasm</location>
    </subcellularLocation>
</comment>
<comment type="similarity">
    <text evidence="1">Belongs to the HisA/HisF family.</text>
</comment>
<reference key="1">
    <citation type="journal article" date="2007" name="J. Bacteriol.">
        <title>Genome-wide transcriptional changes in Streptococcus gordonii in response to competence signaling peptide.</title>
        <authorList>
            <person name="Vickerman M.M."/>
            <person name="Iobst S."/>
            <person name="Jesionowski A.M."/>
            <person name="Gill S.R."/>
        </authorList>
    </citation>
    <scope>NUCLEOTIDE SEQUENCE [LARGE SCALE GENOMIC DNA]</scope>
    <source>
        <strain>Challis / ATCC 35105 / BCRC 15272 / CH1 / DL1 / V288</strain>
    </source>
</reference>
<protein>
    <recommendedName>
        <fullName evidence="1">Imidazole glycerol phosphate synthase subunit HisF</fullName>
        <ecNumber evidence="1">4.3.2.10</ecNumber>
    </recommendedName>
    <alternativeName>
        <fullName evidence="1">IGP synthase cyclase subunit</fullName>
    </alternativeName>
    <alternativeName>
        <fullName evidence="1">IGP synthase subunit HisF</fullName>
    </alternativeName>
    <alternativeName>
        <fullName evidence="1">ImGP synthase subunit HisF</fullName>
        <shortName evidence="1">IGPS subunit HisF</shortName>
    </alternativeName>
</protein>
<gene>
    <name evidence="1" type="primary">hisF</name>
    <name type="ordered locus">SGO_1404</name>
</gene>
<accession>A8AY24</accession>
<name>HIS6_STRGC</name>
<dbReference type="EC" id="4.3.2.10" evidence="1"/>
<dbReference type="EMBL" id="CP000725">
    <property type="protein sequence ID" value="ABV10587.1"/>
    <property type="molecule type" value="Genomic_DNA"/>
</dbReference>
<dbReference type="RefSeq" id="WP_012130489.1">
    <property type="nucleotide sequence ID" value="NC_009785.1"/>
</dbReference>
<dbReference type="SMR" id="A8AY24"/>
<dbReference type="STRING" id="467705.SGO_1404"/>
<dbReference type="KEGG" id="sgo:SGO_1404"/>
<dbReference type="eggNOG" id="COG0107">
    <property type="taxonomic scope" value="Bacteria"/>
</dbReference>
<dbReference type="HOGENOM" id="CLU_048577_4_0_9"/>
<dbReference type="UniPathway" id="UPA00031">
    <property type="reaction ID" value="UER00010"/>
</dbReference>
<dbReference type="Proteomes" id="UP000001131">
    <property type="component" value="Chromosome"/>
</dbReference>
<dbReference type="GO" id="GO:0005737">
    <property type="term" value="C:cytoplasm"/>
    <property type="evidence" value="ECO:0007669"/>
    <property type="project" value="UniProtKB-SubCell"/>
</dbReference>
<dbReference type="GO" id="GO:0000107">
    <property type="term" value="F:imidazoleglycerol-phosphate synthase activity"/>
    <property type="evidence" value="ECO:0007669"/>
    <property type="project" value="UniProtKB-UniRule"/>
</dbReference>
<dbReference type="GO" id="GO:0016829">
    <property type="term" value="F:lyase activity"/>
    <property type="evidence" value="ECO:0007669"/>
    <property type="project" value="UniProtKB-KW"/>
</dbReference>
<dbReference type="GO" id="GO:0000105">
    <property type="term" value="P:L-histidine biosynthetic process"/>
    <property type="evidence" value="ECO:0007669"/>
    <property type="project" value="UniProtKB-UniRule"/>
</dbReference>
<dbReference type="CDD" id="cd04731">
    <property type="entry name" value="HisF"/>
    <property type="match status" value="1"/>
</dbReference>
<dbReference type="FunFam" id="3.20.20.70:FF:000006">
    <property type="entry name" value="Imidazole glycerol phosphate synthase subunit HisF"/>
    <property type="match status" value="1"/>
</dbReference>
<dbReference type="Gene3D" id="3.20.20.70">
    <property type="entry name" value="Aldolase class I"/>
    <property type="match status" value="1"/>
</dbReference>
<dbReference type="HAMAP" id="MF_01013">
    <property type="entry name" value="HisF"/>
    <property type="match status" value="1"/>
</dbReference>
<dbReference type="InterPro" id="IPR013785">
    <property type="entry name" value="Aldolase_TIM"/>
</dbReference>
<dbReference type="InterPro" id="IPR006062">
    <property type="entry name" value="His_biosynth"/>
</dbReference>
<dbReference type="InterPro" id="IPR004651">
    <property type="entry name" value="HisF"/>
</dbReference>
<dbReference type="InterPro" id="IPR050064">
    <property type="entry name" value="IGPS_HisA/HisF"/>
</dbReference>
<dbReference type="InterPro" id="IPR011060">
    <property type="entry name" value="RibuloseP-bd_barrel"/>
</dbReference>
<dbReference type="NCBIfam" id="TIGR00735">
    <property type="entry name" value="hisF"/>
    <property type="match status" value="1"/>
</dbReference>
<dbReference type="PANTHER" id="PTHR21235:SF2">
    <property type="entry name" value="IMIDAZOLE GLYCEROL PHOSPHATE SYNTHASE HISHF"/>
    <property type="match status" value="1"/>
</dbReference>
<dbReference type="PANTHER" id="PTHR21235">
    <property type="entry name" value="IMIDAZOLE GLYCEROL PHOSPHATE SYNTHASE SUBUNIT HISF/H IGP SYNTHASE SUBUNIT HISF/H"/>
    <property type="match status" value="1"/>
</dbReference>
<dbReference type="Pfam" id="PF00977">
    <property type="entry name" value="His_biosynth"/>
    <property type="match status" value="1"/>
</dbReference>
<dbReference type="SUPFAM" id="SSF51366">
    <property type="entry name" value="Ribulose-phoshate binding barrel"/>
    <property type="match status" value="1"/>
</dbReference>
<keyword id="KW-0028">Amino-acid biosynthesis</keyword>
<keyword id="KW-0963">Cytoplasm</keyword>
<keyword id="KW-0368">Histidine biosynthesis</keyword>
<keyword id="KW-0456">Lyase</keyword>
<keyword id="KW-1185">Reference proteome</keyword>
<evidence type="ECO:0000255" key="1">
    <source>
        <dbReference type="HAMAP-Rule" id="MF_01013"/>
    </source>
</evidence>
<feature type="chain" id="PRO_1000084086" description="Imidazole glycerol phosphate synthase subunit HisF">
    <location>
        <begin position="1"/>
        <end position="252"/>
    </location>
</feature>
<feature type="active site" evidence="1">
    <location>
        <position position="11"/>
    </location>
</feature>
<feature type="active site" evidence="1">
    <location>
        <position position="130"/>
    </location>
</feature>
<sequence>MLKKRIIPCLDVKDGRVVKGINFVNLTDVGDPVDASKAYYEAGCDELVFLDITATHEERDTTIEMVRRVAEQVFIPFTVGGGIRTVEDMKRMLQAGADKVAVNSSALANPQLLADCAEKFGSQCVVLAVDAKKEADGSWHVYLAGGRKDSGRELLDWVQEAVGLGAGEILLTSMDKDGTKSGFDLPMLEAVSQVVSVPIIASGGAGSSQHILEVFEKTAATGALAASIFHYGQVSISETKKAMQAAGLEVRI</sequence>
<organism>
    <name type="scientific">Streptococcus gordonii (strain Challis / ATCC 35105 / BCRC 15272 / CH1 / DL1 / V288)</name>
    <dbReference type="NCBI Taxonomy" id="467705"/>
    <lineage>
        <taxon>Bacteria</taxon>
        <taxon>Bacillati</taxon>
        <taxon>Bacillota</taxon>
        <taxon>Bacilli</taxon>
        <taxon>Lactobacillales</taxon>
        <taxon>Streptococcaceae</taxon>
        <taxon>Streptococcus</taxon>
    </lineage>
</organism>